<keyword id="KW-0025">Alternative splicing</keyword>
<keyword id="KW-1003">Cell membrane</keyword>
<keyword id="KW-0963">Cytoplasm</keyword>
<keyword id="KW-0256">Endoplasmic reticulum</keyword>
<keyword id="KW-0378">Hydrolase</keyword>
<keyword id="KW-0472">Membrane</keyword>
<keyword id="KW-0539">Nucleus</keyword>
<keyword id="KW-0597">Phosphoprotein</keyword>
<keyword id="KW-0904">Protein phosphatase</keyword>
<keyword id="KW-1185">Reference proteome</keyword>
<keyword id="KW-0702">S-nitrosylation</keyword>
<feature type="chain" id="PRO_0000094753" description="Tyrosine-protein phosphatase non-receptor type 2">
    <location>
        <begin position="1"/>
        <end position="406"/>
    </location>
</feature>
<feature type="domain" description="Tyrosine-protein phosphatase" evidence="4">
    <location>
        <begin position="5"/>
        <end position="275"/>
    </location>
</feature>
<feature type="region of interest" description="Endoplasmic reticulum location" evidence="1">
    <location>
        <begin position="341"/>
        <end position="406"/>
    </location>
</feature>
<feature type="region of interest" description="Mediates interaction with STX17" evidence="1">
    <location>
        <begin position="371"/>
        <end position="406"/>
    </location>
</feature>
<feature type="active site" description="Phosphocysteine intermediate" evidence="4 5">
    <location>
        <position position="216"/>
    </location>
</feature>
<feature type="binding site" evidence="1">
    <location>
        <position position="182"/>
    </location>
    <ligand>
        <name>substrate</name>
    </ligand>
</feature>
<feature type="binding site" evidence="1">
    <location>
        <begin position="216"/>
        <end position="222"/>
    </location>
    <ligand>
        <name>substrate</name>
    </ligand>
</feature>
<feature type="binding site" evidence="1">
    <location>
        <position position="260"/>
    </location>
    <ligand>
        <name>substrate</name>
    </ligand>
</feature>
<feature type="modified residue" description="Phosphotyrosine" evidence="3">
    <location>
        <position position="22"/>
    </location>
</feature>
<feature type="modified residue" description="Phosphoserine" evidence="3">
    <location>
        <position position="52"/>
    </location>
</feature>
<feature type="modified residue" description="Phosphotyrosine" evidence="3">
    <location>
        <position position="68"/>
    </location>
</feature>
<feature type="modified residue" description="S-nitrosocysteine" evidence="3">
    <location>
        <position position="216"/>
    </location>
</feature>
<feature type="modified residue" description="Phosphoserine" evidence="2">
    <location>
        <position position="293"/>
    </location>
</feature>
<feature type="modified residue" description="Phosphoserine" evidence="2">
    <location>
        <position position="298"/>
    </location>
</feature>
<feature type="modified residue" description="Phosphoserine" evidence="2">
    <location>
        <position position="304"/>
    </location>
</feature>
<feature type="modified residue" description="Phosphoserine" evidence="24">
    <location>
        <position position="320"/>
    </location>
</feature>
<feature type="modified residue" description="Phosphoserine" evidence="3">
    <location>
        <position position="339"/>
    </location>
</feature>
<feature type="splice variant" id="VSP_012367" description="In isoform 2." evidence="20 21">
    <original>WLYWQPILTKMGFVSVILVGALVGWTLLFH</original>
    <variation>PRLTDT</variation>
    <location>
        <begin position="377"/>
        <end position="406"/>
    </location>
</feature>
<feature type="mutagenesis site" description="Catalytically inactive. Unable to restore phosphatase activity toward PDGFRB." evidence="11">
    <original>C</original>
    <variation>S</variation>
    <location>
        <position position="216"/>
    </location>
</feature>
<feature type="modified residue" description="Phosphoserine" evidence="2">
    <location sequence="Q06180-2">
        <position position="304"/>
    </location>
</feature>
<comment type="function">
    <text evidence="6 8 9 11 12 13 14 15 16 18 19">Non-receptor type tyrosine-specific phosphatase that dephosphorylates receptor protein tyrosine kinases including INSR, EGFR, CSF1R, PDGFR. Also dephosphorylates non-receptor protein tyrosine kinases like JAK1, JAK2, JAK3, Src family kinases, STAT1, STAT3 and STAT6 either in the nucleus or the cytoplasm. Negatively regulates numerous signaling pathways and biological processes like hematopoiesis, inflammatory response, cell proliferation and differentiation, and glucose homeostasis. Plays a multifaceted and important role in the development of the immune system. Functions in T-cell receptor signaling through dephosphorylation of FYN and LCK to control T-cells differentiation and activation. Dephosphorylates CSF1R, negatively regulating its downstream signaling and macrophage differentiation. Negatively regulates cytokine (IL2/interleukin-2 and interferon)-mediated signaling through dephosphorylation of the cytoplasmic kinases JAK1, JAK3 and their substrate STAT1, that propagate signaling downstream of the cytokine receptors. Also regulates the IL6/interleukin-6 and IL4/interleukin-4 cytokine signaling through dephosphorylation of STAT3 and STAT6 respectively. In addition to the immune system, it is involved in anchorage-dependent, negative regulation of EGF-stimulated cell growth. Activated by the integrin ITGA1/ITGB1, it dephosphorylates EGFR and negatively regulates EGF signaling. Dephosphorylates PDGFRB and negatively regulates platelet-derived growth factor receptor-beta signaling pathway and therefore cell proliferation. Negatively regulates tumor necrosis factor-mediated signaling downstream via MAPK through SRC dephosphorylation. May also regulate the hepatocyte growth factor receptor signaling pathway through dephosphorylation of the hepatocyte growth factor receptor MET. Also plays an important role in glucose homeostasis. For instance, negatively regulates the insulin receptor signaling pathway through the dephosphorylation of INSR and control gluconeogenesis and liver glucose production through negative regulation of the IL6 signaling pathways. May also bind DNA.</text>
</comment>
<comment type="catalytic activity">
    <reaction evidence="5">
        <text>O-phospho-L-tyrosyl-[protein] + H2O = L-tyrosyl-[protein] + phosphate</text>
        <dbReference type="Rhea" id="RHEA:10684"/>
        <dbReference type="Rhea" id="RHEA-COMP:10136"/>
        <dbReference type="Rhea" id="RHEA-COMP:20101"/>
        <dbReference type="ChEBI" id="CHEBI:15377"/>
        <dbReference type="ChEBI" id="CHEBI:43474"/>
        <dbReference type="ChEBI" id="CHEBI:46858"/>
        <dbReference type="ChEBI" id="CHEBI:61978"/>
        <dbReference type="EC" id="3.1.3.48"/>
    </reaction>
</comment>
<comment type="subunit">
    <text evidence="2 18">Interacts with RMDN3. Isoform 1 interacts with TMED9. Isoform 1 interacts with STX17; dephosphorylates STX17. Interacts with ITGA1 (via cytoplasmic domain); activates the phosphatase activity towards EGFR. Interacts with TRAF2; probably involved in tumor necrosis factor-mediated signaling. Interacts with MET (By similarity). Interacts with FAM220A and STAT3; interaction with FAM220A promotes interaction of PTPN2 with transcriptional activator STAT3, leading to dephosphorylation of STAT3 by PTPN2 and negative regulation of STAT3 transcriptional activator activity (PubMed:26026268).</text>
</comment>
<comment type="subcellular location">
    <molecule>Isoform 1</molecule>
    <subcellularLocation>
        <location evidence="1">Endoplasmic reticulum</location>
    </subcellularLocation>
    <subcellularLocation>
        <location evidence="1">Endoplasmic reticulum-Golgi intermediate compartment</location>
    </subcellularLocation>
    <text evidence="1">Targeted to the endoplasmic reticulum by its C-terminal hydrophobic region.</text>
</comment>
<comment type="subcellular location">
    <molecule>Isoform 2</molecule>
    <subcellularLocation>
        <location evidence="18">Nucleus</location>
    </subcellularLocation>
    <subcellularLocation>
        <location evidence="1">Cytoplasm</location>
    </subcellularLocation>
    <subcellularLocation>
        <location evidence="1">Cell membrane</location>
    </subcellularLocation>
    <text evidence="1">Predominantly localizes to chromatin. Able to shuttle between the nucleus and the cytoplasm and to dephosphorylate plasma membrane receptors. Recruited by activated ITGA1 at the plasma membrane (By similarity).</text>
</comment>
<comment type="alternative products">
    <event type="alternative splicing"/>
    <isoform>
        <id>Q06180-1</id>
        <name>1</name>
        <name>PTPB</name>
        <name>TC-PTPb</name>
        <sequence type="displayed"/>
    </isoform>
    <isoform>
        <id>Q06180-2</id>
        <name>2</name>
        <name>PTPA</name>
        <name>TC-PTPa</name>
        <sequence type="described" ref="VSP_012367"/>
    </isoform>
</comment>
<comment type="tissue specificity">
    <text evidence="15 19">Ubiquitously expressed. The highest expression levels were found in ovary, testis, thymus and kidney.</text>
</comment>
<comment type="PTM">
    <molecule>Isoform 2</molecule>
    <text evidence="2">Specifically phosphorylated in a cell cycle-dependent manner by cyclin-dependent kinases CDK1 and CDK2. Probably activated through phosphorylation by PKR.</text>
</comment>
<comment type="disruption phenotype">
    <text evidence="10 15 16 17 19">Newborn mice are viable and do not display physical abnormalities. However, by 3 to 5 weeks of age they develop hunched posture, diarrhea and anemia. They do not survive beyond 5 weeks of age due to severe anemia, hematopoietic defects and the development of progressive systemic inflammatory disease. They display splenomegaly, lymphadenopathy and thymic atrophy, associated with altered B-cell differentiation, altered erythropoiesis, and impaired T- and B-cell functions. The inflammatory disease is characterized by high levels of circulating pro-inflammatory cytokines and lymphocytic infiltrates in non-lymphoid tissues. Heterozygous Ptpn2+/- mice exhibit decreased gluconeogenesis and hepatic glucose production while muscle-specific disruption of Ptpn2 has no effect on insulin signaling and glucose homeostasis in this tissue.</text>
</comment>
<comment type="similarity">
    <text evidence="23">Belongs to the protein-tyrosine phosphatase family. Non-receptor class 1 subfamily.</text>
</comment>
<comment type="caution">
    <text evidence="7 22">Was reported to dephosphorylate STAT5A and STAT5B in the nucleus to negatively regulate prolactin-mediated signaling pathway (PubMed:11773439). However, the corresponding article has been retracted (PubMed:24319783).</text>
</comment>
<organism>
    <name type="scientific">Mus musculus</name>
    <name type="common">Mouse</name>
    <dbReference type="NCBI Taxonomy" id="10090"/>
    <lineage>
        <taxon>Eukaryota</taxon>
        <taxon>Metazoa</taxon>
        <taxon>Chordata</taxon>
        <taxon>Craniata</taxon>
        <taxon>Vertebrata</taxon>
        <taxon>Euteleostomi</taxon>
        <taxon>Mammalia</taxon>
        <taxon>Eutheria</taxon>
        <taxon>Euarchontoglires</taxon>
        <taxon>Glires</taxon>
        <taxon>Rodentia</taxon>
        <taxon>Myomorpha</taxon>
        <taxon>Muroidea</taxon>
        <taxon>Muridae</taxon>
        <taxon>Murinae</taxon>
        <taxon>Mus</taxon>
        <taxon>Mus</taxon>
    </lineage>
</organism>
<sequence length="406" mass="47360">MSATIEREFEELDAQCRWQPLYLEIRNESHDYPHRVAKFPENRNRNRYRDVSPYDHSRVKLQSTENDYINASLVDIEEAQRSYILTQGPLPNTCCHFWLMVWQQKTKAVVMLNRTVEKESVKCAQYWPTDDREMVFKETGFSVKLLSEDVKSYYTVHLLQLENINTGETRTISHFHYTTWPDFGVPESPASFLNFLFKVRESGCLTPDHGPAVIHCSAGIGRSGTFSLVDTCLVLMEKGEDVNVKQLLLNMRKYRMGLIQTPDQLRFSYMAIIEGAKYTKGDSNIQKRWKELSKEDLSPICDHSQNRVMVEKYNGKRIGSEDEKLTGLPSKVQDTVEESSESILRKRIREDRKATTAQKVQQMKQRLNETERKRKRWLYWQPILTKMGFVSVILVGALVGWTLLFH</sequence>
<protein>
    <recommendedName>
        <fullName>Tyrosine-protein phosphatase non-receptor type 2</fullName>
        <shortName>Protein-tyrosine phosphatase PTP-2</shortName>
        <ecNumber>3.1.3.48</ecNumber>
    </recommendedName>
    <alternativeName>
        <fullName>MPTP</fullName>
    </alternativeName>
</protein>
<gene>
    <name type="primary">Ptpn2</name>
    <name type="synonym">Ptpt</name>
</gene>
<reference key="1">
    <citation type="journal article" date="1992" name="Proc. Natl. Acad. Sci. U.S.A.">
        <title>Cloning and characterization of a mouse cDNA encoding a cytoplasmic protein-tyrosine-phosphatase.</title>
        <authorList>
            <person name="Mosinger B. Jr."/>
            <person name="Tillmann U."/>
            <person name="Westphal H."/>
            <person name="Tremblay M.L."/>
        </authorList>
    </citation>
    <scope>NUCLEOTIDE SEQUENCE [MRNA] (ISOFORM 2)</scope>
</reference>
<reference key="2">
    <citation type="journal article" date="1992" name="Mol. Cell. Biochem.">
        <title>Molecular cloning, nucleotide sequence and expression of a cDNA encoding an intracellular protein tyrosine phosphatase, PTPase-2, from mouse testis and T-cells.</title>
        <authorList>
            <person name="Miyasaka H."/>
            <person name="Li S.S.-L."/>
        </authorList>
    </citation>
    <scope>NUCLEOTIDE SEQUENCE [MRNA] (ISOFORM 2)</scope>
    <source>
        <strain>C57BL/6N</strain>
        <tissue>T-cell</tissue>
        <tissue>Testis</tissue>
    </source>
</reference>
<reference key="3">
    <citation type="journal article" date="2005" name="Science">
        <title>The transcriptional landscape of the mammalian genome.</title>
        <authorList>
            <person name="Carninci P."/>
            <person name="Kasukawa T."/>
            <person name="Katayama S."/>
            <person name="Gough J."/>
            <person name="Frith M.C."/>
            <person name="Maeda N."/>
            <person name="Oyama R."/>
            <person name="Ravasi T."/>
            <person name="Lenhard B."/>
            <person name="Wells C."/>
            <person name="Kodzius R."/>
            <person name="Shimokawa K."/>
            <person name="Bajic V.B."/>
            <person name="Brenner S.E."/>
            <person name="Batalov S."/>
            <person name="Forrest A.R."/>
            <person name="Zavolan M."/>
            <person name="Davis M.J."/>
            <person name="Wilming L.G."/>
            <person name="Aidinis V."/>
            <person name="Allen J.E."/>
            <person name="Ambesi-Impiombato A."/>
            <person name="Apweiler R."/>
            <person name="Aturaliya R.N."/>
            <person name="Bailey T.L."/>
            <person name="Bansal M."/>
            <person name="Baxter L."/>
            <person name="Beisel K.W."/>
            <person name="Bersano T."/>
            <person name="Bono H."/>
            <person name="Chalk A.M."/>
            <person name="Chiu K.P."/>
            <person name="Choudhary V."/>
            <person name="Christoffels A."/>
            <person name="Clutterbuck D.R."/>
            <person name="Crowe M.L."/>
            <person name="Dalla E."/>
            <person name="Dalrymple B.P."/>
            <person name="de Bono B."/>
            <person name="Della Gatta G."/>
            <person name="di Bernardo D."/>
            <person name="Down T."/>
            <person name="Engstrom P."/>
            <person name="Fagiolini M."/>
            <person name="Faulkner G."/>
            <person name="Fletcher C.F."/>
            <person name="Fukushima T."/>
            <person name="Furuno M."/>
            <person name="Futaki S."/>
            <person name="Gariboldi M."/>
            <person name="Georgii-Hemming P."/>
            <person name="Gingeras T.R."/>
            <person name="Gojobori T."/>
            <person name="Green R.E."/>
            <person name="Gustincich S."/>
            <person name="Harbers M."/>
            <person name="Hayashi Y."/>
            <person name="Hensch T.K."/>
            <person name="Hirokawa N."/>
            <person name="Hill D."/>
            <person name="Huminiecki L."/>
            <person name="Iacono M."/>
            <person name="Ikeo K."/>
            <person name="Iwama A."/>
            <person name="Ishikawa T."/>
            <person name="Jakt M."/>
            <person name="Kanapin A."/>
            <person name="Katoh M."/>
            <person name="Kawasawa Y."/>
            <person name="Kelso J."/>
            <person name="Kitamura H."/>
            <person name="Kitano H."/>
            <person name="Kollias G."/>
            <person name="Krishnan S.P."/>
            <person name="Kruger A."/>
            <person name="Kummerfeld S.K."/>
            <person name="Kurochkin I.V."/>
            <person name="Lareau L.F."/>
            <person name="Lazarevic D."/>
            <person name="Lipovich L."/>
            <person name="Liu J."/>
            <person name="Liuni S."/>
            <person name="McWilliam S."/>
            <person name="Madan Babu M."/>
            <person name="Madera M."/>
            <person name="Marchionni L."/>
            <person name="Matsuda H."/>
            <person name="Matsuzawa S."/>
            <person name="Miki H."/>
            <person name="Mignone F."/>
            <person name="Miyake S."/>
            <person name="Morris K."/>
            <person name="Mottagui-Tabar S."/>
            <person name="Mulder N."/>
            <person name="Nakano N."/>
            <person name="Nakauchi H."/>
            <person name="Ng P."/>
            <person name="Nilsson R."/>
            <person name="Nishiguchi S."/>
            <person name="Nishikawa S."/>
            <person name="Nori F."/>
            <person name="Ohara O."/>
            <person name="Okazaki Y."/>
            <person name="Orlando V."/>
            <person name="Pang K.C."/>
            <person name="Pavan W.J."/>
            <person name="Pavesi G."/>
            <person name="Pesole G."/>
            <person name="Petrovsky N."/>
            <person name="Piazza S."/>
            <person name="Reed J."/>
            <person name="Reid J.F."/>
            <person name="Ring B.Z."/>
            <person name="Ringwald M."/>
            <person name="Rost B."/>
            <person name="Ruan Y."/>
            <person name="Salzberg S.L."/>
            <person name="Sandelin A."/>
            <person name="Schneider C."/>
            <person name="Schoenbach C."/>
            <person name="Sekiguchi K."/>
            <person name="Semple C.A."/>
            <person name="Seno S."/>
            <person name="Sessa L."/>
            <person name="Sheng Y."/>
            <person name="Shibata Y."/>
            <person name="Shimada H."/>
            <person name="Shimada K."/>
            <person name="Silva D."/>
            <person name="Sinclair B."/>
            <person name="Sperling S."/>
            <person name="Stupka E."/>
            <person name="Sugiura K."/>
            <person name="Sultana R."/>
            <person name="Takenaka Y."/>
            <person name="Taki K."/>
            <person name="Tammoja K."/>
            <person name="Tan S.L."/>
            <person name="Tang S."/>
            <person name="Taylor M.S."/>
            <person name="Tegner J."/>
            <person name="Teichmann S.A."/>
            <person name="Ueda H.R."/>
            <person name="van Nimwegen E."/>
            <person name="Verardo R."/>
            <person name="Wei C.L."/>
            <person name="Yagi K."/>
            <person name="Yamanishi H."/>
            <person name="Zabarovsky E."/>
            <person name="Zhu S."/>
            <person name="Zimmer A."/>
            <person name="Hide W."/>
            <person name="Bult C."/>
            <person name="Grimmond S.M."/>
            <person name="Teasdale R.D."/>
            <person name="Liu E.T."/>
            <person name="Brusic V."/>
            <person name="Quackenbush J."/>
            <person name="Wahlestedt C."/>
            <person name="Mattick J.S."/>
            <person name="Hume D.A."/>
            <person name="Kai C."/>
            <person name="Sasaki D."/>
            <person name="Tomaru Y."/>
            <person name="Fukuda S."/>
            <person name="Kanamori-Katayama M."/>
            <person name="Suzuki M."/>
            <person name="Aoki J."/>
            <person name="Arakawa T."/>
            <person name="Iida J."/>
            <person name="Imamura K."/>
            <person name="Itoh M."/>
            <person name="Kato T."/>
            <person name="Kawaji H."/>
            <person name="Kawagashira N."/>
            <person name="Kawashima T."/>
            <person name="Kojima M."/>
            <person name="Kondo S."/>
            <person name="Konno H."/>
            <person name="Nakano K."/>
            <person name="Ninomiya N."/>
            <person name="Nishio T."/>
            <person name="Okada M."/>
            <person name="Plessy C."/>
            <person name="Shibata K."/>
            <person name="Shiraki T."/>
            <person name="Suzuki S."/>
            <person name="Tagami M."/>
            <person name="Waki K."/>
            <person name="Watahiki A."/>
            <person name="Okamura-Oho Y."/>
            <person name="Suzuki H."/>
            <person name="Kawai J."/>
            <person name="Hayashizaki Y."/>
        </authorList>
    </citation>
    <scope>NUCLEOTIDE SEQUENCE [LARGE SCALE MRNA] (ISOFORM 1)</scope>
</reference>
<reference key="4">
    <citation type="journal article" date="2004" name="Genome Res.">
        <title>The status, quality, and expansion of the NIH full-length cDNA project: the Mammalian Gene Collection (MGC).</title>
        <authorList>
            <consortium name="The MGC Project Team"/>
        </authorList>
    </citation>
    <scope>NUCLEOTIDE SEQUENCE [LARGE SCALE MRNA] (ISOFORM 1)</scope>
    <source>
        <strain>FVB/N</strain>
        <tissue>Mammary gland</tissue>
    </source>
</reference>
<reference key="5">
    <citation type="journal article" date="1997" name="J. Exp. Med.">
        <title>Impaired bone marrow microenvironment and immune function in T cell protein tyrosine phosphatase-deficient mice.</title>
        <authorList>
            <person name="You-Ten K.E."/>
            <person name="Muise E.S."/>
            <person name="Itie A."/>
            <person name="Michaliszyn E."/>
            <person name="Wagner J."/>
            <person name="Jothy S."/>
            <person name="Lapp W.S."/>
            <person name="Tremblay M.L."/>
        </authorList>
    </citation>
    <scope>DISRUPTION PHENOTYPE</scope>
    <scope>FUNCTION IN IMMUNE SYSTEM DEVELOPMENT</scope>
    <scope>TISSUE SPECIFICITY</scope>
</reference>
<reference key="6">
    <citation type="journal article" date="2001" name="Oncogene">
        <title>Murine embryonic fibroblasts lacking TC-PTP display delayed G1 phase through defective NF-kappaB activation.</title>
        <authorList>
            <person name="Ibarra-Sanchez M.J."/>
            <person name="Wagner J."/>
            <person name="Ong M.T."/>
            <person name="Lampron C."/>
            <person name="Tremblay M.L."/>
        </authorList>
    </citation>
    <scope>FUNCTION IN PDGF SIGNALING</scope>
</reference>
<reference key="7">
    <citation type="journal article" date="2002" name="Curr. Biol.">
        <title>The T cell protein tyrosine phosphatase is a negative regulator of janus family kinases 1 and 3.</title>
        <authorList>
            <person name="Simoncic P.D."/>
            <person name="Lee-Loy A."/>
            <person name="Barber D.L."/>
            <person name="Tremblay M.L."/>
            <person name="McGlade C.J."/>
        </authorList>
    </citation>
    <scope>FUNCTION IN CYTOKINE SIGNALING</scope>
</reference>
<reference key="8">
    <citation type="journal article" date="2002" name="Mol. Cell. Biol.">
        <title>Identification of a nuclear Stat1 protein tyrosine phosphatase.</title>
        <authorList>
            <person name="ten Hoeve J."/>
            <person name="de Jesus Ibarra-Sanchez M."/>
            <person name="Fu Y."/>
            <person name="Zhu W."/>
            <person name="Tremblay M."/>
            <person name="David M."/>
            <person name="Shuai K."/>
        </authorList>
    </citation>
    <scope>FUNCTION IN DEPHOSPHORYLATION OF STAT1</scope>
</reference>
<reference key="9">
    <citation type="journal article" date="2002" name="Mol. Endocrinol.">
        <title>A nuclear protein tyrosine phosphatase TC-PTP is a potential negative regulator of the PRL-mediated signaling pathway: dephosphorylation and deactivation of signal transducer and activator of transcription 5a and 5b by TC-PTP in nucleus.</title>
        <authorList>
            <person name="Aoki N."/>
            <person name="Matsuda T."/>
        </authorList>
    </citation>
    <scope>RETRACTED PAPER</scope>
</reference>
<reference key="10">
    <citation type="journal article" date="2013" name="Mol. Endocrinol.">
        <title>Retraction.</title>
        <authorList>
            <person name="Aoki N."/>
            <person name="Matsuda T."/>
        </authorList>
    </citation>
    <scope>RETRACTION NOTICE OF PUBMED:11773439</scope>
</reference>
<reference key="11">
    <citation type="journal article" date="2010" name="Cell">
        <title>A tissue-specific atlas of mouse protein phosphorylation and expression.</title>
        <authorList>
            <person name="Huttlin E.L."/>
            <person name="Jedrychowski M.P."/>
            <person name="Elias J.E."/>
            <person name="Goswami T."/>
            <person name="Rad R."/>
            <person name="Beausoleil S.A."/>
            <person name="Villen J."/>
            <person name="Haas W."/>
            <person name="Sowa M.E."/>
            <person name="Gygi S.P."/>
        </authorList>
    </citation>
    <scope>PHOSPHORYLATION [LARGE SCALE ANALYSIS] AT SER-320</scope>
    <scope>IDENTIFICATION BY MASS SPECTROMETRY [LARGE SCALE ANALYSIS]</scope>
    <source>
        <tissue>Spleen</tissue>
        <tissue>Testis</tissue>
    </source>
</reference>
<reference key="12">
    <citation type="journal article" date="2004" name="Blood">
        <title>T-cell protein tyrosine phosphatase deletion results in progressive systemic inflammatory disease.</title>
        <authorList>
            <person name="Heinonen K.M."/>
            <person name="Nestel F.P."/>
            <person name="Newell E.W."/>
            <person name="Charette G."/>
            <person name="Seemayer T.A."/>
            <person name="Tremblay M.L."/>
            <person name="Lapp W.S."/>
        </authorList>
    </citation>
    <scope>DISRUPTION PHENOTYPE</scope>
</reference>
<reference key="13">
    <citation type="journal article" date="2004" name="Mol. Cell. Biol.">
        <title>Site-selective regulation of platelet-derived growth factor beta receptor tyrosine phosphorylation by T-cell protein tyrosine phosphatase.</title>
        <authorList>
            <person name="Persson C."/>
            <person name="Saevenhed C."/>
            <person name="Bourdeau A."/>
            <person name="Tremblay M.L."/>
            <person name="Markova B."/>
            <person name="Boehmer F.D."/>
            <person name="Haj F.G."/>
            <person name="Neel B.G."/>
            <person name="Elson A."/>
            <person name="Heldin C.H."/>
            <person name="Roennstrand L."/>
            <person name="Ostman A."/>
            <person name="Hellberg C."/>
        </authorList>
    </citation>
    <scope>FUNCTION IN DEPHOSPHORYLATION OF PDGFRB</scope>
    <scope>MUTAGENESIS OF CYS-216</scope>
</reference>
<reference key="14">
    <citation type="journal article" date="2005" name="Nat. Immunol.">
        <title>Selective regulation of tumor necrosis factor-induced Erk signaling by Src family kinases and the T cell protein tyrosine phosphatase.</title>
        <authorList>
            <person name="van Vliet C."/>
            <person name="Bukczynska P.E."/>
            <person name="Puryer M.A."/>
            <person name="Sadek C.M."/>
            <person name="Shields B.J."/>
            <person name="Tremblay M.L."/>
            <person name="Tiganis T."/>
        </authorList>
    </citation>
    <scope>FUNCTION IN TUMOR NECROSIS FACTOR SIGNALING</scope>
</reference>
<reference key="15">
    <citation type="journal article" date="2006" name="Mol. Cell. Biol.">
        <title>T-cell protein tyrosine phosphatase (Tcptp) is a negative regulator of colony-stimulating factor 1 signaling and macrophage differentiation.</title>
        <authorList>
            <person name="Simoncic P.D."/>
            <person name="Bourdeau A."/>
            <person name="Lee-Loy A."/>
            <person name="Rohrschneider L.R."/>
            <person name="Tremblay M.L."/>
            <person name="Stanley E.R."/>
            <person name="McGlade C.J."/>
        </authorList>
    </citation>
    <scope>FUNCTION IN DEPHOSPHORYLATION OF CSF1R</scope>
</reference>
<reference key="16">
    <citation type="journal article" date="2007" name="Mol. Cell. Biol.">
        <title>T-cell protein tyrosine phosphatase, distinctively expressed in activated-B-cell-like diffuse large B-cell lymphomas, is the nuclear phosphatase of STAT6.</title>
        <authorList>
            <person name="Lu X."/>
            <person name="Chen J."/>
            <person name="Sasmono R.T."/>
            <person name="Hsi E.D."/>
            <person name="Sarosiek K.A."/>
            <person name="Tiganis T."/>
            <person name="Lossos I.S."/>
        </authorList>
    </citation>
    <scope>FUNCTION IN DEPHOSPHORYLATION OF STAT6</scope>
</reference>
<reference key="17">
    <citation type="journal article" date="2010" name="Diabetes">
        <title>T-cell protein tyrosine phosphatase attenuates STAT3 and insulin signaling in the liver to regulate gluconeogenesis.</title>
        <authorList>
            <person name="Fukushima A."/>
            <person name="Loh K."/>
            <person name="Galic S."/>
            <person name="Fam B."/>
            <person name="Shields B."/>
            <person name="Wiede F."/>
            <person name="Tremblay M.L."/>
            <person name="Watt M.J."/>
            <person name="Andrikopoulos S."/>
            <person name="Tiganis T."/>
        </authorList>
    </citation>
    <scope>DISRUPTION PHENOTYPE</scope>
    <scope>FUNCTION IN GLUCOSE HOMEOSTASIS</scope>
    <scope>TISSUE SPECIFICITY</scope>
</reference>
<reference key="18">
    <citation type="journal article" date="2011" name="J. Clin. Invest.">
        <title>T cell protein tyrosine phosphatase attenuates T cell signaling to maintain tolerance in mice.</title>
        <authorList>
            <person name="Wiede F."/>
            <person name="Shields B.J."/>
            <person name="Chew S.H."/>
            <person name="Kyparissoudis K."/>
            <person name="van Vliet C."/>
            <person name="Galic S."/>
            <person name="Tremblay M.L."/>
            <person name="Russell S.M."/>
            <person name="Godfrey D.I."/>
            <person name="Tiganis T."/>
        </authorList>
    </citation>
    <scope>DISRUPTION PHENOTYPE</scope>
    <scope>FUNCTION IN T-CELL RECEPTOR SIGNALING</scope>
</reference>
<reference key="19">
    <citation type="journal article" date="2012" name="Diabetologia">
        <title>T cell protein tyrosine phosphatase (TCPTP) deficiency in muscle does not alter insulin signalling and glucose homeostasis in mice.</title>
        <authorList>
            <person name="Loh K."/>
            <person name="Merry T.L."/>
            <person name="Galic S."/>
            <person name="Wu B.J."/>
            <person name="Watt M.J."/>
            <person name="Zhang S."/>
            <person name="Zhang Z.Y."/>
            <person name="Neel B.G."/>
            <person name="Tiganis T."/>
        </authorList>
    </citation>
    <scope>DISRUPTION PHENOTYPE</scope>
</reference>
<reference key="20">
    <citation type="journal article" date="2015" name="FEBS Lett.">
        <title>Nuclear termination of STAT3 signaling through SIPAR (STAT3-Interacting Protein As a Repressor)-dependent recruitment of T cell tyrosine phosphatase TC-PTP.</title>
        <authorList>
            <person name="Ren F."/>
            <person name="Geng Y."/>
            <person name="Minami T."/>
            <person name="Qiu Y."/>
            <person name="Feng Y."/>
            <person name="Liu C."/>
            <person name="Zhao J."/>
            <person name="Wang Y."/>
            <person name="Fan X."/>
            <person name="Wang Y."/>
            <person name="Li M."/>
            <person name="Li J."/>
            <person name="Chang Z."/>
        </authorList>
    </citation>
    <scope>FUNCTION</scope>
    <scope>INTERACTION WITH FAM220A AND STAT3</scope>
    <scope>SUBCELLULAR LOCATION</scope>
</reference>
<accession>Q06180</accession>
<accession>Q3V259</accession>
<accession>Q922E7</accession>
<proteinExistence type="evidence at protein level"/>
<evidence type="ECO:0000250" key="1"/>
<evidence type="ECO:0000250" key="2">
    <source>
        <dbReference type="UniProtKB" id="P17706"/>
    </source>
</evidence>
<evidence type="ECO:0000250" key="3">
    <source>
        <dbReference type="UniProtKB" id="P18031"/>
    </source>
</evidence>
<evidence type="ECO:0000255" key="4">
    <source>
        <dbReference type="PROSITE-ProRule" id="PRU00160"/>
    </source>
</evidence>
<evidence type="ECO:0000255" key="5">
    <source>
        <dbReference type="PROSITE-ProRule" id="PRU10044"/>
    </source>
</evidence>
<evidence type="ECO:0000269" key="6">
    <source>
    </source>
</evidence>
<evidence type="ECO:0000269" key="7">
    <source>
    </source>
</evidence>
<evidence type="ECO:0000269" key="8">
    <source>
    </source>
</evidence>
<evidence type="ECO:0000269" key="9">
    <source>
    </source>
</evidence>
<evidence type="ECO:0000269" key="10">
    <source>
    </source>
</evidence>
<evidence type="ECO:0000269" key="11">
    <source>
    </source>
</evidence>
<evidence type="ECO:0000269" key="12">
    <source>
    </source>
</evidence>
<evidence type="ECO:0000269" key="13">
    <source>
    </source>
</evidence>
<evidence type="ECO:0000269" key="14">
    <source>
    </source>
</evidence>
<evidence type="ECO:0000269" key="15">
    <source>
    </source>
</evidence>
<evidence type="ECO:0000269" key="16">
    <source>
    </source>
</evidence>
<evidence type="ECO:0000269" key="17">
    <source>
    </source>
</evidence>
<evidence type="ECO:0000269" key="18">
    <source>
    </source>
</evidence>
<evidence type="ECO:0000269" key="19">
    <source>
    </source>
</evidence>
<evidence type="ECO:0000303" key="20">
    <source>
    </source>
</evidence>
<evidence type="ECO:0000303" key="21">
    <source>
    </source>
</evidence>
<evidence type="ECO:0000303" key="22">
    <source>
    </source>
</evidence>
<evidence type="ECO:0000305" key="23"/>
<evidence type="ECO:0007744" key="24">
    <source>
    </source>
</evidence>
<name>PTN2_MOUSE</name>
<dbReference type="EC" id="3.1.3.48"/>
<dbReference type="EMBL" id="M81477">
    <property type="protein sequence ID" value="AAA37446.1"/>
    <property type="molecule type" value="mRNA"/>
</dbReference>
<dbReference type="EMBL" id="S52655">
    <property type="protein sequence ID" value="AAB25035.2"/>
    <property type="molecule type" value="mRNA"/>
</dbReference>
<dbReference type="EMBL" id="BC008269">
    <property type="protein sequence ID" value="AAH08269.1"/>
    <property type="molecule type" value="mRNA"/>
</dbReference>
<dbReference type="EMBL" id="AK076072">
    <property type="protein sequence ID" value="BAC36163.1"/>
    <property type="molecule type" value="mRNA"/>
</dbReference>
<dbReference type="EMBL" id="AK132013">
    <property type="protein sequence ID" value="BAE20939.1"/>
    <property type="molecule type" value="mRNA"/>
</dbReference>
<dbReference type="CCDS" id="CCDS37851.1">
    <molecule id="Q06180-2"/>
</dbReference>
<dbReference type="CCDS" id="CCDS50311.1">
    <molecule id="Q06180-1"/>
</dbReference>
<dbReference type="PIR" id="A38191">
    <property type="entry name" value="A38191"/>
</dbReference>
<dbReference type="RefSeq" id="NP_001120649.1">
    <molecule id="Q06180-1"/>
    <property type="nucleotide sequence ID" value="NM_001127177.1"/>
</dbReference>
<dbReference type="RefSeq" id="NP_033003.1">
    <molecule id="Q06180-2"/>
    <property type="nucleotide sequence ID" value="NM_008977.3"/>
</dbReference>
<dbReference type="RefSeq" id="XP_011245160.1">
    <molecule id="Q06180-2"/>
    <property type="nucleotide sequence ID" value="XM_011246858.4"/>
</dbReference>
<dbReference type="SMR" id="Q06180"/>
<dbReference type="BioGRID" id="202484">
    <property type="interactions" value="33"/>
</dbReference>
<dbReference type="FunCoup" id="Q06180">
    <property type="interactions" value="4657"/>
</dbReference>
<dbReference type="IntAct" id="Q06180">
    <property type="interactions" value="5"/>
</dbReference>
<dbReference type="STRING" id="10090.ENSMUSP00000112675"/>
<dbReference type="GlyGen" id="Q06180">
    <property type="glycosylation" value="2 sites, 1 N-linked glycan (1 site), 1 O-linked glycan (1 site)"/>
</dbReference>
<dbReference type="iPTMnet" id="Q06180"/>
<dbReference type="PhosphoSitePlus" id="Q06180"/>
<dbReference type="SwissPalm" id="Q06180"/>
<dbReference type="jPOST" id="Q06180"/>
<dbReference type="PaxDb" id="10090-ENSMUSP00000112675"/>
<dbReference type="PeptideAtlas" id="Q06180"/>
<dbReference type="ProteomicsDB" id="301874">
    <molecule id="Q06180-1"/>
</dbReference>
<dbReference type="ProteomicsDB" id="301875">
    <molecule id="Q06180-2"/>
</dbReference>
<dbReference type="Pumba" id="Q06180"/>
<dbReference type="Antibodypedia" id="6936">
    <property type="antibodies" value="308 antibodies from 34 providers"/>
</dbReference>
<dbReference type="DNASU" id="19255"/>
<dbReference type="Ensembl" id="ENSMUST00000025420.14">
    <molecule id="Q06180-2"/>
    <property type="protein sequence ID" value="ENSMUSP00000025420.8"/>
    <property type="gene ID" value="ENSMUSG00000024539.18"/>
</dbReference>
<dbReference type="Ensembl" id="ENSMUST00000122412.2">
    <molecule id="Q06180-1"/>
    <property type="protein sequence ID" value="ENSMUSP00000112675.2"/>
    <property type="gene ID" value="ENSMUSG00000024539.18"/>
</dbReference>
<dbReference type="GeneID" id="19255"/>
<dbReference type="KEGG" id="mmu:19255"/>
<dbReference type="UCSC" id="uc008fmu.2">
    <molecule id="Q06180-2"/>
    <property type="organism name" value="mouse"/>
</dbReference>
<dbReference type="UCSC" id="uc008fmv.2">
    <molecule id="Q06180-1"/>
    <property type="organism name" value="mouse"/>
</dbReference>
<dbReference type="AGR" id="MGI:97806"/>
<dbReference type="CTD" id="5771"/>
<dbReference type="MGI" id="MGI:97806">
    <property type="gene designation" value="Ptpn2"/>
</dbReference>
<dbReference type="VEuPathDB" id="HostDB:ENSMUSG00000024539"/>
<dbReference type="eggNOG" id="KOG0789">
    <property type="taxonomic scope" value="Eukaryota"/>
</dbReference>
<dbReference type="GeneTree" id="ENSGT00940000154686"/>
<dbReference type="InParanoid" id="Q06180"/>
<dbReference type="OMA" id="WKPIVIK"/>
<dbReference type="OrthoDB" id="9450131at2759"/>
<dbReference type="PhylomeDB" id="Q06180"/>
<dbReference type="TreeFam" id="TF315897"/>
<dbReference type="Reactome" id="R-MMU-6807004">
    <property type="pathway name" value="Negative regulation of MET activity"/>
</dbReference>
<dbReference type="Reactome" id="R-MMU-877312">
    <property type="pathway name" value="Regulation of IFNG signaling"/>
</dbReference>
<dbReference type="Reactome" id="R-MMU-9833482">
    <property type="pathway name" value="PKR-mediated signaling"/>
</dbReference>
<dbReference type="BioGRID-ORCS" id="19255">
    <property type="hits" value="20 hits in 86 CRISPR screens"/>
</dbReference>
<dbReference type="ChiTaRS" id="Ptpn2">
    <property type="organism name" value="mouse"/>
</dbReference>
<dbReference type="PRO" id="PR:Q06180"/>
<dbReference type="Proteomes" id="UP000000589">
    <property type="component" value="Chromosome 18"/>
</dbReference>
<dbReference type="RNAct" id="Q06180">
    <property type="molecule type" value="protein"/>
</dbReference>
<dbReference type="Bgee" id="ENSMUSG00000024539">
    <property type="expression patterns" value="Expressed in cleaving embryo and 257 other cell types or tissues"/>
</dbReference>
<dbReference type="ExpressionAtlas" id="Q06180">
    <property type="expression patterns" value="baseline and differential"/>
</dbReference>
<dbReference type="GO" id="GO:0005829">
    <property type="term" value="C:cytosol"/>
    <property type="evidence" value="ECO:0007669"/>
    <property type="project" value="Ensembl"/>
</dbReference>
<dbReference type="GO" id="GO:0005783">
    <property type="term" value="C:endoplasmic reticulum"/>
    <property type="evidence" value="ECO:0000250"/>
    <property type="project" value="UniProtKB"/>
</dbReference>
<dbReference type="GO" id="GO:0005793">
    <property type="term" value="C:endoplasmic reticulum-Golgi intermediate compartment"/>
    <property type="evidence" value="ECO:0000250"/>
    <property type="project" value="UniProtKB"/>
</dbReference>
<dbReference type="GO" id="GO:0031904">
    <property type="term" value="C:endosome lumen"/>
    <property type="evidence" value="ECO:0000314"/>
    <property type="project" value="MGI"/>
</dbReference>
<dbReference type="GO" id="GO:0005654">
    <property type="term" value="C:nucleoplasm"/>
    <property type="evidence" value="ECO:0007669"/>
    <property type="project" value="Ensembl"/>
</dbReference>
<dbReference type="GO" id="GO:0005634">
    <property type="term" value="C:nucleus"/>
    <property type="evidence" value="ECO:0000314"/>
    <property type="project" value="ParkinsonsUK-UCL"/>
</dbReference>
<dbReference type="GO" id="GO:0005886">
    <property type="term" value="C:plasma membrane"/>
    <property type="evidence" value="ECO:0007669"/>
    <property type="project" value="UniProtKB-SubCell"/>
</dbReference>
<dbReference type="GO" id="GO:0005178">
    <property type="term" value="F:integrin binding"/>
    <property type="evidence" value="ECO:0007669"/>
    <property type="project" value="Ensembl"/>
</dbReference>
<dbReference type="GO" id="GO:0004725">
    <property type="term" value="F:protein tyrosine phosphatase activity"/>
    <property type="evidence" value="ECO:0000314"/>
    <property type="project" value="MGI"/>
</dbReference>
<dbReference type="GO" id="GO:0030971">
    <property type="term" value="F:receptor tyrosine kinase binding"/>
    <property type="evidence" value="ECO:0007669"/>
    <property type="project" value="Ensembl"/>
</dbReference>
<dbReference type="GO" id="GO:0097677">
    <property type="term" value="F:STAT family protein binding"/>
    <property type="evidence" value="ECO:0000353"/>
    <property type="project" value="MGI"/>
</dbReference>
<dbReference type="GO" id="GO:0019905">
    <property type="term" value="F:syntaxin binding"/>
    <property type="evidence" value="ECO:0007669"/>
    <property type="project" value="Ensembl"/>
</dbReference>
<dbReference type="GO" id="GO:0030183">
    <property type="term" value="P:B cell differentiation"/>
    <property type="evidence" value="ECO:0000315"/>
    <property type="project" value="UniProtKB"/>
</dbReference>
<dbReference type="GO" id="GO:0030218">
    <property type="term" value="P:erythrocyte differentiation"/>
    <property type="evidence" value="ECO:0000315"/>
    <property type="project" value="UniProtKB"/>
</dbReference>
<dbReference type="GO" id="GO:0042593">
    <property type="term" value="P:glucose homeostasis"/>
    <property type="evidence" value="ECO:0000315"/>
    <property type="project" value="UniProtKB"/>
</dbReference>
<dbReference type="GO" id="GO:0038020">
    <property type="term" value="P:insulin receptor recycling"/>
    <property type="evidence" value="ECO:0000314"/>
    <property type="project" value="MGI"/>
</dbReference>
<dbReference type="GO" id="GO:0008286">
    <property type="term" value="P:insulin receptor signaling pathway"/>
    <property type="evidence" value="ECO:0000315"/>
    <property type="project" value="MGI"/>
</dbReference>
<dbReference type="GO" id="GO:0008285">
    <property type="term" value="P:negative regulation of cell population proliferation"/>
    <property type="evidence" value="ECO:0000250"/>
    <property type="project" value="UniProtKB"/>
</dbReference>
<dbReference type="GO" id="GO:0050922">
    <property type="term" value="P:negative regulation of chemotaxis"/>
    <property type="evidence" value="ECO:0000315"/>
    <property type="project" value="UniProtKB"/>
</dbReference>
<dbReference type="GO" id="GO:0042059">
    <property type="term" value="P:negative regulation of epidermal growth factor receptor signaling pathway"/>
    <property type="evidence" value="ECO:0000250"/>
    <property type="project" value="UniProtKB"/>
</dbReference>
<dbReference type="GO" id="GO:0070373">
    <property type="term" value="P:negative regulation of ERK1 and ERK2 cascade"/>
    <property type="evidence" value="ECO:0000315"/>
    <property type="project" value="UniProtKB"/>
</dbReference>
<dbReference type="GO" id="GO:0050728">
    <property type="term" value="P:negative regulation of inflammatory response"/>
    <property type="evidence" value="ECO:0000315"/>
    <property type="project" value="UniProtKB"/>
</dbReference>
<dbReference type="GO" id="GO:0046627">
    <property type="term" value="P:negative regulation of insulin receptor signaling pathway"/>
    <property type="evidence" value="ECO:0000315"/>
    <property type="project" value="UniProtKB"/>
</dbReference>
<dbReference type="GO" id="GO:1902206">
    <property type="term" value="P:negative regulation of interleukin-2-mediated signaling pathway"/>
    <property type="evidence" value="ECO:0000315"/>
    <property type="project" value="UniProtKB"/>
</dbReference>
<dbReference type="GO" id="GO:1902215">
    <property type="term" value="P:negative regulation of interleukin-4-mediated signaling pathway"/>
    <property type="evidence" value="ECO:0000315"/>
    <property type="project" value="UniProtKB"/>
</dbReference>
<dbReference type="GO" id="GO:0070104">
    <property type="term" value="P:negative regulation of interleukin-6-mediated signaling pathway"/>
    <property type="evidence" value="ECO:0000315"/>
    <property type="project" value="UniProtKB"/>
</dbReference>
<dbReference type="GO" id="GO:0010888">
    <property type="term" value="P:negative regulation of lipid storage"/>
    <property type="evidence" value="ECO:0000315"/>
    <property type="project" value="UniProtKB"/>
</dbReference>
<dbReference type="GO" id="GO:1902227">
    <property type="term" value="P:negative regulation of macrophage colony-stimulating factor signaling pathway"/>
    <property type="evidence" value="ECO:0000315"/>
    <property type="project" value="UniProtKB"/>
</dbReference>
<dbReference type="GO" id="GO:0045650">
    <property type="term" value="P:negative regulation of macrophage differentiation"/>
    <property type="evidence" value="ECO:0000315"/>
    <property type="project" value="UniProtKB"/>
</dbReference>
<dbReference type="GO" id="GO:2000587">
    <property type="term" value="P:negative regulation of platelet-derived growth factor receptor-beta signaling pathway"/>
    <property type="evidence" value="ECO:0000315"/>
    <property type="project" value="UniProtKB"/>
</dbReference>
<dbReference type="GO" id="GO:1902233">
    <property type="term" value="P:negative regulation of positive thymic T cell selection"/>
    <property type="evidence" value="ECO:0000315"/>
    <property type="project" value="UniProtKB"/>
</dbReference>
<dbReference type="GO" id="GO:0061099">
    <property type="term" value="P:negative regulation of protein tyrosine kinase activity"/>
    <property type="evidence" value="ECO:0000315"/>
    <property type="project" value="ParkinsonsUK-UCL"/>
</dbReference>
<dbReference type="GO" id="GO:0050860">
    <property type="term" value="P:negative regulation of T cell receptor signaling pathway"/>
    <property type="evidence" value="ECO:0000315"/>
    <property type="project" value="UniProtKB"/>
</dbReference>
<dbReference type="GO" id="GO:0000122">
    <property type="term" value="P:negative regulation of transcription by RNA polymerase II"/>
    <property type="evidence" value="ECO:0000353"/>
    <property type="project" value="MGI"/>
</dbReference>
<dbReference type="GO" id="GO:0010804">
    <property type="term" value="P:negative regulation of tumor necrosis factor-mediated signaling pathway"/>
    <property type="evidence" value="ECO:0000315"/>
    <property type="project" value="UniProtKB"/>
</dbReference>
<dbReference type="GO" id="GO:0060339">
    <property type="term" value="P:negative regulation of type I interferon-mediated signaling pathway"/>
    <property type="evidence" value="ECO:0000315"/>
    <property type="project" value="UniProtKB"/>
</dbReference>
<dbReference type="GO" id="GO:0060336">
    <property type="term" value="P:negative regulation of type II interferon-mediated signaling pathway"/>
    <property type="evidence" value="ECO:0000315"/>
    <property type="project" value="UniProtKB"/>
</dbReference>
<dbReference type="GO" id="GO:0042532">
    <property type="term" value="P:negative regulation of tyrosine phosphorylation of STAT protein"/>
    <property type="evidence" value="ECO:0000250"/>
    <property type="project" value="UniProtKB"/>
</dbReference>
<dbReference type="GO" id="GO:0035335">
    <property type="term" value="P:peptidyl-tyrosine dephosphorylation"/>
    <property type="evidence" value="ECO:0000315"/>
    <property type="project" value="UniProtKB"/>
</dbReference>
<dbReference type="GO" id="GO:1902237">
    <property type="term" value="P:positive regulation of endoplasmic reticulum stress-induced intrinsic apoptotic signaling pathway"/>
    <property type="evidence" value="ECO:0000315"/>
    <property type="project" value="ParkinsonsUK-UCL"/>
</dbReference>
<dbReference type="GO" id="GO:0045722">
    <property type="term" value="P:positive regulation of gluconeogenesis"/>
    <property type="evidence" value="ECO:0000315"/>
    <property type="project" value="UniProtKB"/>
</dbReference>
<dbReference type="GO" id="GO:1903899">
    <property type="term" value="P:positive regulation of PERK-mediated unfolded protein response"/>
    <property type="evidence" value="ECO:0000315"/>
    <property type="project" value="ParkinsonsUK-UCL"/>
</dbReference>
<dbReference type="GO" id="GO:1902202">
    <property type="term" value="P:regulation of hepatocyte growth factor receptor signaling pathway"/>
    <property type="evidence" value="ECO:0000250"/>
    <property type="project" value="UniProtKB"/>
</dbReference>
<dbReference type="GO" id="GO:0030217">
    <property type="term" value="P:T cell differentiation"/>
    <property type="evidence" value="ECO:0000315"/>
    <property type="project" value="UniProtKB"/>
</dbReference>
<dbReference type="FunFam" id="3.90.190.10:FF:000025">
    <property type="entry name" value="Tyrosine-protein phosphatase non-receptor type 1"/>
    <property type="match status" value="1"/>
</dbReference>
<dbReference type="Gene3D" id="3.90.190.10">
    <property type="entry name" value="Protein tyrosine phosphatase superfamily"/>
    <property type="match status" value="1"/>
</dbReference>
<dbReference type="InterPro" id="IPR051985">
    <property type="entry name" value="NR_tyrosine_phosphatase"/>
</dbReference>
<dbReference type="InterPro" id="IPR029021">
    <property type="entry name" value="Prot-tyrosine_phosphatase-like"/>
</dbReference>
<dbReference type="InterPro" id="IPR000242">
    <property type="entry name" value="PTP_cat"/>
</dbReference>
<dbReference type="InterPro" id="IPR012265">
    <property type="entry name" value="Ptpn1/Ptpn2"/>
</dbReference>
<dbReference type="InterPro" id="IPR016130">
    <property type="entry name" value="Tyr_Pase_AS"/>
</dbReference>
<dbReference type="InterPro" id="IPR003595">
    <property type="entry name" value="Tyr_Pase_cat"/>
</dbReference>
<dbReference type="InterPro" id="IPR000387">
    <property type="entry name" value="Tyr_Pase_dom"/>
</dbReference>
<dbReference type="PANTHER" id="PTHR46047:SF1">
    <property type="entry name" value="TYROSINE-PROTEIN PHOSPHATASE NON-RECEPTOR TYPE 2"/>
    <property type="match status" value="1"/>
</dbReference>
<dbReference type="PANTHER" id="PTHR46047">
    <property type="entry name" value="TYROSINE-PROTEIN PHOSPHATASE NON-RECEPTOR TYPE 61F"/>
    <property type="match status" value="1"/>
</dbReference>
<dbReference type="Pfam" id="PF00102">
    <property type="entry name" value="Y_phosphatase"/>
    <property type="match status" value="1"/>
</dbReference>
<dbReference type="PIRSF" id="PIRSF000926">
    <property type="entry name" value="Tyr-Ptase_nr1"/>
    <property type="match status" value="1"/>
</dbReference>
<dbReference type="PRINTS" id="PR00700">
    <property type="entry name" value="PRTYPHPHTASE"/>
</dbReference>
<dbReference type="SMART" id="SM00194">
    <property type="entry name" value="PTPc"/>
    <property type="match status" value="1"/>
</dbReference>
<dbReference type="SMART" id="SM00404">
    <property type="entry name" value="PTPc_motif"/>
    <property type="match status" value="1"/>
</dbReference>
<dbReference type="SUPFAM" id="SSF52799">
    <property type="entry name" value="(Phosphotyrosine protein) phosphatases II"/>
    <property type="match status" value="1"/>
</dbReference>
<dbReference type="PROSITE" id="PS00383">
    <property type="entry name" value="TYR_PHOSPHATASE_1"/>
    <property type="match status" value="1"/>
</dbReference>
<dbReference type="PROSITE" id="PS50056">
    <property type="entry name" value="TYR_PHOSPHATASE_2"/>
    <property type="match status" value="1"/>
</dbReference>
<dbReference type="PROSITE" id="PS50055">
    <property type="entry name" value="TYR_PHOSPHATASE_PTP"/>
    <property type="match status" value="1"/>
</dbReference>